<reference key="1">
    <citation type="journal article" date="2009" name="PLoS Pathog.">
        <title>Molecular evolutionary consequences of niche restriction in Francisella tularensis, a facultative intracellular pathogen.</title>
        <authorList>
            <person name="Larsson P."/>
            <person name="Elfsmark D."/>
            <person name="Svensson K."/>
            <person name="Wikstroem P."/>
            <person name="Forsman M."/>
            <person name="Brettin T."/>
            <person name="Keim P."/>
            <person name="Johansson A."/>
        </authorList>
    </citation>
    <scope>NUCLEOTIDE SEQUENCE [LARGE SCALE GENOMIC DNA]</scope>
    <source>
        <strain>FSC147</strain>
    </source>
</reference>
<protein>
    <recommendedName>
        <fullName evidence="1">Ribosomal RNA small subunit methyltransferase A</fullName>
        <ecNumber evidence="1">2.1.1.182</ecNumber>
    </recommendedName>
    <alternativeName>
        <fullName evidence="1">16S rRNA (adenine(1518)-N(6)/adenine(1519)-N(6))-dimethyltransferase</fullName>
    </alternativeName>
    <alternativeName>
        <fullName evidence="1">16S rRNA dimethyladenosine transferase</fullName>
    </alternativeName>
    <alternativeName>
        <fullName evidence="1">16S rRNA dimethylase</fullName>
    </alternativeName>
    <alternativeName>
        <fullName evidence="1">S-adenosylmethionine-6-N', N'-adenosyl(rRNA) dimethyltransferase</fullName>
    </alternativeName>
</protein>
<gene>
    <name evidence="1" type="primary">rsmA</name>
    <name evidence="1" type="synonym">ksgA</name>
    <name type="ordered locus">FTM_1434</name>
</gene>
<accession>B2SDQ1</accession>
<feature type="chain" id="PRO_1000130279" description="Ribosomal RNA small subunit methyltransferase A">
    <location>
        <begin position="1"/>
        <end position="262"/>
    </location>
</feature>
<feature type="binding site" evidence="1">
    <location>
        <position position="14"/>
    </location>
    <ligand>
        <name>S-adenosyl-L-methionine</name>
        <dbReference type="ChEBI" id="CHEBI:59789"/>
    </ligand>
</feature>
<feature type="binding site" evidence="1">
    <location>
        <position position="16"/>
    </location>
    <ligand>
        <name>S-adenosyl-L-methionine</name>
        <dbReference type="ChEBI" id="CHEBI:59789"/>
    </ligand>
</feature>
<feature type="binding site" evidence="1">
    <location>
        <position position="41"/>
    </location>
    <ligand>
        <name>S-adenosyl-L-methionine</name>
        <dbReference type="ChEBI" id="CHEBI:59789"/>
    </ligand>
</feature>
<feature type="binding site" evidence="1">
    <location>
        <position position="62"/>
    </location>
    <ligand>
        <name>S-adenosyl-L-methionine</name>
        <dbReference type="ChEBI" id="CHEBI:59789"/>
    </ligand>
</feature>
<feature type="binding site" evidence="1">
    <location>
        <position position="87"/>
    </location>
    <ligand>
        <name>S-adenosyl-L-methionine</name>
        <dbReference type="ChEBI" id="CHEBI:59789"/>
    </ligand>
</feature>
<feature type="binding site" evidence="1">
    <location>
        <position position="109"/>
    </location>
    <ligand>
        <name>S-adenosyl-L-methionine</name>
        <dbReference type="ChEBI" id="CHEBI:59789"/>
    </ligand>
</feature>
<organism>
    <name type="scientific">Francisella tularensis subsp. mediasiatica (strain FSC147)</name>
    <dbReference type="NCBI Taxonomy" id="441952"/>
    <lineage>
        <taxon>Bacteria</taxon>
        <taxon>Pseudomonadati</taxon>
        <taxon>Pseudomonadota</taxon>
        <taxon>Gammaproteobacteria</taxon>
        <taxon>Thiotrichales</taxon>
        <taxon>Francisellaceae</taxon>
        <taxon>Francisella</taxon>
    </lineage>
</organism>
<name>RSMA_FRATM</name>
<evidence type="ECO:0000255" key="1">
    <source>
        <dbReference type="HAMAP-Rule" id="MF_00607"/>
    </source>
</evidence>
<dbReference type="EC" id="2.1.1.182" evidence="1"/>
<dbReference type="EMBL" id="CP000915">
    <property type="protein sequence ID" value="ACD31265.1"/>
    <property type="molecule type" value="Genomic_DNA"/>
</dbReference>
<dbReference type="SMR" id="B2SDQ1"/>
<dbReference type="KEGG" id="ftm:FTM_1434"/>
<dbReference type="HOGENOM" id="CLU_041220_0_1_6"/>
<dbReference type="GO" id="GO:0005829">
    <property type="term" value="C:cytosol"/>
    <property type="evidence" value="ECO:0007669"/>
    <property type="project" value="TreeGrafter"/>
</dbReference>
<dbReference type="GO" id="GO:0052908">
    <property type="term" value="F:16S rRNA (adenine(1518)-N(6)/adenine(1519)-N(6))-dimethyltransferase activity"/>
    <property type="evidence" value="ECO:0007669"/>
    <property type="project" value="UniProtKB-EC"/>
</dbReference>
<dbReference type="GO" id="GO:0003723">
    <property type="term" value="F:RNA binding"/>
    <property type="evidence" value="ECO:0007669"/>
    <property type="project" value="UniProtKB-KW"/>
</dbReference>
<dbReference type="FunFam" id="1.10.8.100:FF:000001">
    <property type="entry name" value="Ribosomal RNA small subunit methyltransferase A"/>
    <property type="match status" value="1"/>
</dbReference>
<dbReference type="FunFam" id="3.40.50.150:FF:000023">
    <property type="entry name" value="Ribosomal RNA small subunit methyltransferase A"/>
    <property type="match status" value="1"/>
</dbReference>
<dbReference type="Gene3D" id="1.10.8.100">
    <property type="entry name" value="Ribosomal RNA adenine dimethylase-like, domain 2"/>
    <property type="match status" value="1"/>
</dbReference>
<dbReference type="Gene3D" id="3.40.50.150">
    <property type="entry name" value="Vaccinia Virus protein VP39"/>
    <property type="match status" value="1"/>
</dbReference>
<dbReference type="HAMAP" id="MF_00607">
    <property type="entry name" value="16SrRNA_methyltr_A"/>
    <property type="match status" value="1"/>
</dbReference>
<dbReference type="InterPro" id="IPR001737">
    <property type="entry name" value="KsgA/Erm"/>
</dbReference>
<dbReference type="InterPro" id="IPR023165">
    <property type="entry name" value="rRNA_Ade_diMease-like_C"/>
</dbReference>
<dbReference type="InterPro" id="IPR020596">
    <property type="entry name" value="rRNA_Ade_Mease_Trfase_CS"/>
</dbReference>
<dbReference type="InterPro" id="IPR020598">
    <property type="entry name" value="rRNA_Ade_methylase_Trfase_N"/>
</dbReference>
<dbReference type="InterPro" id="IPR011530">
    <property type="entry name" value="rRNA_adenine_dimethylase"/>
</dbReference>
<dbReference type="InterPro" id="IPR029063">
    <property type="entry name" value="SAM-dependent_MTases_sf"/>
</dbReference>
<dbReference type="NCBIfam" id="TIGR00755">
    <property type="entry name" value="ksgA"/>
    <property type="match status" value="1"/>
</dbReference>
<dbReference type="PANTHER" id="PTHR11727">
    <property type="entry name" value="DIMETHYLADENOSINE TRANSFERASE"/>
    <property type="match status" value="1"/>
</dbReference>
<dbReference type="PANTHER" id="PTHR11727:SF7">
    <property type="entry name" value="DIMETHYLADENOSINE TRANSFERASE-RELATED"/>
    <property type="match status" value="1"/>
</dbReference>
<dbReference type="Pfam" id="PF00398">
    <property type="entry name" value="RrnaAD"/>
    <property type="match status" value="1"/>
</dbReference>
<dbReference type="SMART" id="SM00650">
    <property type="entry name" value="rADc"/>
    <property type="match status" value="1"/>
</dbReference>
<dbReference type="SUPFAM" id="SSF53335">
    <property type="entry name" value="S-adenosyl-L-methionine-dependent methyltransferases"/>
    <property type="match status" value="1"/>
</dbReference>
<dbReference type="PROSITE" id="PS01131">
    <property type="entry name" value="RRNA_A_DIMETH"/>
    <property type="match status" value="1"/>
</dbReference>
<dbReference type="PROSITE" id="PS51689">
    <property type="entry name" value="SAM_RNA_A_N6_MT"/>
    <property type="match status" value="1"/>
</dbReference>
<proteinExistence type="inferred from homology"/>
<sequence>MQYKTKAKKSLGQNFLQDENIIRKIVQLANIKKHDIVVEIGPGLGALTRYLLSSSNNVSVVEFDASVIDTLIANCQKYGTPHIYNQDFLKFDISSLENSSNQKIKLIGNLPYNISSPILFKVIKDSDKIVDAHFMLQKEVVERIVSLPNSKSYGRLSVILQYHFDCSMILKIPPEVFYPQPKVDSAILRLKPKNSKELLKNYNFFEEIVKQSFAQRRKTLHNNLKSILKERKIDPSTLPVDTNLRAENLSVGDFVSLANFLS</sequence>
<comment type="function">
    <text evidence="1">Specifically dimethylates two adjacent adenosines (A1518 and A1519) in the loop of a conserved hairpin near the 3'-end of 16S rRNA in the 30S particle. May play a critical role in biogenesis of 30S subunits.</text>
</comment>
<comment type="catalytic activity">
    <reaction evidence="1">
        <text>adenosine(1518)/adenosine(1519) in 16S rRNA + 4 S-adenosyl-L-methionine = N(6)-dimethyladenosine(1518)/N(6)-dimethyladenosine(1519) in 16S rRNA + 4 S-adenosyl-L-homocysteine + 4 H(+)</text>
        <dbReference type="Rhea" id="RHEA:19609"/>
        <dbReference type="Rhea" id="RHEA-COMP:10232"/>
        <dbReference type="Rhea" id="RHEA-COMP:10233"/>
        <dbReference type="ChEBI" id="CHEBI:15378"/>
        <dbReference type="ChEBI" id="CHEBI:57856"/>
        <dbReference type="ChEBI" id="CHEBI:59789"/>
        <dbReference type="ChEBI" id="CHEBI:74411"/>
        <dbReference type="ChEBI" id="CHEBI:74493"/>
        <dbReference type="EC" id="2.1.1.182"/>
    </reaction>
</comment>
<comment type="subcellular location">
    <subcellularLocation>
        <location evidence="1">Cytoplasm</location>
    </subcellularLocation>
</comment>
<comment type="similarity">
    <text evidence="1">Belongs to the class I-like SAM-binding methyltransferase superfamily. rRNA adenine N(6)-methyltransferase family. RsmA subfamily.</text>
</comment>
<keyword id="KW-0963">Cytoplasm</keyword>
<keyword id="KW-0489">Methyltransferase</keyword>
<keyword id="KW-0694">RNA-binding</keyword>
<keyword id="KW-0698">rRNA processing</keyword>
<keyword id="KW-0949">S-adenosyl-L-methionine</keyword>
<keyword id="KW-0808">Transferase</keyword>